<keyword id="KW-0997">Cell inner membrane</keyword>
<keyword id="KW-1003">Cell membrane</keyword>
<keyword id="KW-0407">Ion channel</keyword>
<keyword id="KW-0406">Ion transport</keyword>
<keyword id="KW-0472">Membrane</keyword>
<keyword id="KW-0812">Transmembrane</keyword>
<keyword id="KW-1133">Transmembrane helix</keyword>
<keyword id="KW-0813">Transport</keyword>
<proteinExistence type="inferred from homology"/>
<protein>
    <recommendedName>
        <fullName evidence="1">Large-conductance mechanosensitive channel</fullName>
    </recommendedName>
</protein>
<dbReference type="EMBL" id="CP001091">
    <property type="protein sequence ID" value="ACE62306.1"/>
    <property type="molecule type" value="Genomic_DNA"/>
</dbReference>
<dbReference type="RefSeq" id="WP_005620517.1">
    <property type="nucleotide sequence ID" value="NC_010939.1"/>
</dbReference>
<dbReference type="SMR" id="B3H2I9"/>
<dbReference type="GeneID" id="48599878"/>
<dbReference type="KEGG" id="apa:APP7_1654"/>
<dbReference type="HOGENOM" id="CLU_095787_0_0_6"/>
<dbReference type="Proteomes" id="UP000001226">
    <property type="component" value="Chromosome"/>
</dbReference>
<dbReference type="GO" id="GO:0005886">
    <property type="term" value="C:plasma membrane"/>
    <property type="evidence" value="ECO:0007669"/>
    <property type="project" value="UniProtKB-SubCell"/>
</dbReference>
<dbReference type="GO" id="GO:0008381">
    <property type="term" value="F:mechanosensitive monoatomic ion channel activity"/>
    <property type="evidence" value="ECO:0007669"/>
    <property type="project" value="UniProtKB-UniRule"/>
</dbReference>
<dbReference type="FunFam" id="1.10.1200.120:FF:000001">
    <property type="entry name" value="Large-conductance mechanosensitive channel"/>
    <property type="match status" value="1"/>
</dbReference>
<dbReference type="Gene3D" id="1.10.1200.120">
    <property type="entry name" value="Large-conductance mechanosensitive channel, MscL, domain 1"/>
    <property type="match status" value="1"/>
</dbReference>
<dbReference type="HAMAP" id="MF_00115">
    <property type="entry name" value="MscL"/>
    <property type="match status" value="1"/>
</dbReference>
<dbReference type="InterPro" id="IPR019823">
    <property type="entry name" value="Mechanosensitive_channel_CS"/>
</dbReference>
<dbReference type="InterPro" id="IPR001185">
    <property type="entry name" value="MS_channel"/>
</dbReference>
<dbReference type="InterPro" id="IPR037673">
    <property type="entry name" value="MSC/AndL"/>
</dbReference>
<dbReference type="InterPro" id="IPR036019">
    <property type="entry name" value="MscL_channel"/>
</dbReference>
<dbReference type="NCBIfam" id="TIGR00220">
    <property type="entry name" value="mscL"/>
    <property type="match status" value="1"/>
</dbReference>
<dbReference type="NCBIfam" id="NF001843">
    <property type="entry name" value="PRK00567.1-4"/>
    <property type="match status" value="1"/>
</dbReference>
<dbReference type="PANTHER" id="PTHR30266:SF2">
    <property type="entry name" value="LARGE-CONDUCTANCE MECHANOSENSITIVE CHANNEL"/>
    <property type="match status" value="1"/>
</dbReference>
<dbReference type="PANTHER" id="PTHR30266">
    <property type="entry name" value="MECHANOSENSITIVE CHANNEL MSCL"/>
    <property type="match status" value="1"/>
</dbReference>
<dbReference type="Pfam" id="PF01741">
    <property type="entry name" value="MscL"/>
    <property type="match status" value="1"/>
</dbReference>
<dbReference type="PRINTS" id="PR01264">
    <property type="entry name" value="MECHCHANNEL"/>
</dbReference>
<dbReference type="SUPFAM" id="SSF81330">
    <property type="entry name" value="Gated mechanosensitive channel"/>
    <property type="match status" value="1"/>
</dbReference>
<dbReference type="PROSITE" id="PS01327">
    <property type="entry name" value="MSCL"/>
    <property type="match status" value="1"/>
</dbReference>
<feature type="chain" id="PRO_1000094874" description="Large-conductance mechanosensitive channel">
    <location>
        <begin position="1"/>
        <end position="129"/>
    </location>
</feature>
<feature type="transmembrane region" description="Helical" evidence="1">
    <location>
        <begin position="10"/>
        <end position="30"/>
    </location>
</feature>
<feature type="transmembrane region" description="Helical" evidence="1">
    <location>
        <begin position="76"/>
        <end position="96"/>
    </location>
</feature>
<gene>
    <name evidence="1" type="primary">mscL</name>
    <name type="ordered locus">APP7_1654</name>
</gene>
<evidence type="ECO:0000255" key="1">
    <source>
        <dbReference type="HAMAP-Rule" id="MF_00115"/>
    </source>
</evidence>
<organism>
    <name type="scientific">Actinobacillus pleuropneumoniae serotype 7 (strain AP76)</name>
    <dbReference type="NCBI Taxonomy" id="537457"/>
    <lineage>
        <taxon>Bacteria</taxon>
        <taxon>Pseudomonadati</taxon>
        <taxon>Pseudomonadota</taxon>
        <taxon>Gammaproteobacteria</taxon>
        <taxon>Pasteurellales</taxon>
        <taxon>Pasteurellaceae</taxon>
        <taxon>Actinobacillus</taxon>
    </lineage>
</organism>
<comment type="function">
    <text evidence="1">Channel that opens in response to stretch forces in the membrane lipid bilayer. May participate in the regulation of osmotic pressure changes within the cell.</text>
</comment>
<comment type="subunit">
    <text evidence="1">Homopentamer.</text>
</comment>
<comment type="subcellular location">
    <subcellularLocation>
        <location evidence="1">Cell inner membrane</location>
        <topology evidence="1">Multi-pass membrane protein</topology>
    </subcellularLocation>
</comment>
<comment type="similarity">
    <text evidence="1">Belongs to the MscL family.</text>
</comment>
<sequence>MSILKEFREFAVKGNVVDMAVGVIIGGAFGKIVSSLVSDVVMPPIGWLIGGVDFKDLAIEIAPAKEGAEAVMLKYGAFIQNVFDFLIIAIAVFGMVKVINKIKKPAEAAPAEPTAEEKLLTEIRDLLKK</sequence>
<reference key="1">
    <citation type="submission" date="2008-06" db="EMBL/GenBank/DDBJ databases">
        <title>Genome and proteome analysis of A. pleuropneumoniae serotype 7.</title>
        <authorList>
            <person name="Linke B."/>
            <person name="Buettner F."/>
            <person name="Martinez-Arias R."/>
            <person name="Goesmann A."/>
            <person name="Baltes N."/>
            <person name="Tegetmeyer H."/>
            <person name="Singh M."/>
            <person name="Gerlach G.F."/>
        </authorList>
    </citation>
    <scope>NUCLEOTIDE SEQUENCE [LARGE SCALE GENOMIC DNA]</scope>
    <source>
        <strain>AP76</strain>
    </source>
</reference>
<name>MSCL_ACTP7</name>
<accession>B3H2I9</accession>